<name>SBNO2_HUMAN</name>
<comment type="function">
    <text evidence="1 3">Acts as a transcriptional coregulator, that can have both coactivator and corepressor functions. Inhibits the DCSTAMP-repressive activity of TAL1, hence enhancing the access of the transcription factor MITF to the DC-STAMP promoter in osteoclast. Plays a role in bone homeostasis; required as a positive regulator in TNFSF11//RANKL-mediated osteoclast fusion via a DCSTAMP-dependent pathway. May also be required in the regulation of osteoblast differentiation (By similarity). Involved in the transcriptional corepression of NF-kappaB in macrophages (PubMed:18025162). Plays a role as a regulator in the pro-inflammatory cascade (PubMed:18025162).</text>
</comment>
<comment type="subunit">
    <text evidence="1">Interacts with TAL1; this interaction inhibits TAL1 occupancy of the DCSTAMP promoter, leading to the activation of the DCSTAMP promoter by the transcription factor MITF.</text>
</comment>
<comment type="alternative products">
    <event type="alternative splicing"/>
    <isoform>
        <id>Q9Y2G9-1</id>
        <name>1</name>
        <sequence type="displayed"/>
    </isoform>
    <isoform>
        <id>Q9Y2G9-3</id>
        <name>2</name>
        <sequence type="described" ref="VSP_041216"/>
    </isoform>
</comment>
<comment type="tissue specificity">
    <text evidence="3">Detected in macrophages. IL10 regulates expression in a STAT3-dependent way.</text>
</comment>
<comment type="induction">
    <text evidence="4">Up-regulated by interleukin IL6 and soluble interleukin receptor IL6R in astrocytes (PubMed:25903009).</text>
</comment>
<comment type="similarity">
    <text evidence="5">Belongs to the SBNO family.</text>
</comment>
<comment type="sequence caution" evidence="5">
    <conflict type="erroneous gene model prediction">
        <sequence resource="EMBL-CDS" id="AAC28919"/>
    </conflict>
</comment>
<comment type="sequence caution" evidence="5">
    <conflict type="erroneous initiation">
        <sequence resource="EMBL-CDS" id="BAA76807"/>
    </conflict>
    <text>Extended N-terminus.</text>
</comment>
<comment type="sequence caution" evidence="5">
    <conflict type="frameshift">
        <sequence resource="EMBL-CDS" id="BAB84928"/>
    </conflict>
</comment>
<keyword id="KW-0010">Activator</keyword>
<keyword id="KW-0025">Alternative splicing</keyword>
<keyword id="KW-0221">Differentiation</keyword>
<keyword id="KW-0892">Osteogenesis</keyword>
<keyword id="KW-1267">Proteomics identification</keyword>
<keyword id="KW-1185">Reference proteome</keyword>
<keyword id="KW-0678">Repressor</keyword>
<keyword id="KW-0804">Transcription</keyword>
<keyword id="KW-0805">Transcription regulation</keyword>
<organism>
    <name type="scientific">Homo sapiens</name>
    <name type="common">Human</name>
    <dbReference type="NCBI Taxonomy" id="9606"/>
    <lineage>
        <taxon>Eukaryota</taxon>
        <taxon>Metazoa</taxon>
        <taxon>Chordata</taxon>
        <taxon>Craniata</taxon>
        <taxon>Vertebrata</taxon>
        <taxon>Euteleostomi</taxon>
        <taxon>Mammalia</taxon>
        <taxon>Eutheria</taxon>
        <taxon>Euarchontoglires</taxon>
        <taxon>Primates</taxon>
        <taxon>Haplorrhini</taxon>
        <taxon>Catarrhini</taxon>
        <taxon>Hominidae</taxon>
        <taxon>Homo</taxon>
    </lineage>
</organism>
<proteinExistence type="evidence at protein level"/>
<feature type="chain" id="PRO_0000314560" description="Protein strawberry notch homolog 2">
    <location>
        <begin position="1"/>
        <end position="1366"/>
    </location>
</feature>
<feature type="region of interest" description="Disordered" evidence="2">
    <location>
        <begin position="1"/>
        <end position="24"/>
    </location>
</feature>
<feature type="region of interest" description="Disordered" evidence="2">
    <location>
        <begin position="174"/>
        <end position="217"/>
    </location>
</feature>
<feature type="region of interest" description="Disordered" evidence="2">
    <location>
        <begin position="614"/>
        <end position="640"/>
    </location>
</feature>
<feature type="region of interest" description="Disordered" evidence="2">
    <location>
        <begin position="1324"/>
        <end position="1366"/>
    </location>
</feature>
<feature type="compositionally biased region" description="Pro residues" evidence="2">
    <location>
        <begin position="15"/>
        <end position="24"/>
    </location>
</feature>
<feature type="compositionally biased region" description="Acidic residues" evidence="2">
    <location>
        <begin position="182"/>
        <end position="194"/>
    </location>
</feature>
<feature type="compositionally biased region" description="Basic residues" evidence="2">
    <location>
        <begin position="614"/>
        <end position="637"/>
    </location>
</feature>
<feature type="compositionally biased region" description="Gly residues" evidence="2">
    <location>
        <begin position="1333"/>
        <end position="1347"/>
    </location>
</feature>
<feature type="splice variant" id="VSP_041216" description="In isoform 2." evidence="5">
    <original>MLAVGPAMDRDYPQHEPPPAGSLLYSPPPLQSAMLHCPYWNTFSLPPYPAFSSDSRPFMSSASFLGSQPCPDTSYAPVATASSLPPKTCDFAQ</original>
    <variation>MREPLPGSASWGTPGPPSAGTMSQLQLWLQFEALNK</variation>
    <location>
        <begin position="1"/>
        <end position="93"/>
    </location>
</feature>
<feature type="sequence conflict" description="In Ref. 2; BAF85096." evidence="5" ref="2">
    <original>K</original>
    <variation>R</variation>
    <location>
        <position position="545"/>
    </location>
</feature>
<feature type="sequence conflict" description="In Ref. 2; BAG54153." evidence="5" ref="2">
    <original>S</original>
    <variation>F</variation>
    <location>
        <position position="670"/>
    </location>
</feature>
<feature type="sequence conflict" description="In Ref. 1; BAA76807 and 4; BAB84928." evidence="5" ref="1 4">
    <original>P</original>
    <variation>S</variation>
    <location>
        <position position="694"/>
    </location>
</feature>
<feature type="sequence conflict" description="In Ref. 4; BAB84928." evidence="5" ref="4">
    <original>R</original>
    <variation>Q</variation>
    <location>
        <position position="724"/>
    </location>
</feature>
<feature type="sequence conflict" description="In Ref. 4; BAB84928." evidence="5" ref="4">
    <original>A</original>
    <variation>G</variation>
    <location>
        <position position="1343"/>
    </location>
</feature>
<protein>
    <recommendedName>
        <fullName>Protein strawberry notch homolog 2</fullName>
    </recommendedName>
</protein>
<accession>Q9Y2G9</accession>
<accession>A8K8P2</accession>
<accession>B3KWJ1</accession>
<accession>O75257</accession>
<accession>Q3KQX0</accession>
<accession>Q8TEM0</accession>
<reference key="1">
    <citation type="journal article" date="1999" name="DNA Res.">
        <title>Prediction of the coding sequences of unidentified human genes. XIII. The complete sequences of 100 new cDNA clones from brain which code for large proteins in vitro.</title>
        <authorList>
            <person name="Nagase T."/>
            <person name="Ishikawa K."/>
            <person name="Suyama M."/>
            <person name="Kikuno R."/>
            <person name="Hirosawa M."/>
            <person name="Miyajima N."/>
            <person name="Tanaka A."/>
            <person name="Kotani H."/>
            <person name="Nomura N."/>
            <person name="Ohara O."/>
        </authorList>
    </citation>
    <scope>NUCLEOTIDE SEQUENCE [LARGE SCALE MRNA] (ISOFORM 1)</scope>
    <source>
        <tissue>Brain</tissue>
    </source>
</reference>
<reference key="2">
    <citation type="journal article" date="2004" name="Nat. Genet.">
        <title>Complete sequencing and characterization of 21,243 full-length human cDNAs.</title>
        <authorList>
            <person name="Ota T."/>
            <person name="Suzuki Y."/>
            <person name="Nishikawa T."/>
            <person name="Otsuki T."/>
            <person name="Sugiyama T."/>
            <person name="Irie R."/>
            <person name="Wakamatsu A."/>
            <person name="Hayashi K."/>
            <person name="Sato H."/>
            <person name="Nagai K."/>
            <person name="Kimura K."/>
            <person name="Makita H."/>
            <person name="Sekine M."/>
            <person name="Obayashi M."/>
            <person name="Nishi T."/>
            <person name="Shibahara T."/>
            <person name="Tanaka T."/>
            <person name="Ishii S."/>
            <person name="Yamamoto J."/>
            <person name="Saito K."/>
            <person name="Kawai Y."/>
            <person name="Isono Y."/>
            <person name="Nakamura Y."/>
            <person name="Nagahari K."/>
            <person name="Murakami K."/>
            <person name="Yasuda T."/>
            <person name="Iwayanagi T."/>
            <person name="Wagatsuma M."/>
            <person name="Shiratori A."/>
            <person name="Sudo H."/>
            <person name="Hosoiri T."/>
            <person name="Kaku Y."/>
            <person name="Kodaira H."/>
            <person name="Kondo H."/>
            <person name="Sugawara M."/>
            <person name="Takahashi M."/>
            <person name="Kanda K."/>
            <person name="Yokoi T."/>
            <person name="Furuya T."/>
            <person name="Kikkawa E."/>
            <person name="Omura Y."/>
            <person name="Abe K."/>
            <person name="Kamihara K."/>
            <person name="Katsuta N."/>
            <person name="Sato K."/>
            <person name="Tanikawa M."/>
            <person name="Yamazaki M."/>
            <person name="Ninomiya K."/>
            <person name="Ishibashi T."/>
            <person name="Yamashita H."/>
            <person name="Murakawa K."/>
            <person name="Fujimori K."/>
            <person name="Tanai H."/>
            <person name="Kimata M."/>
            <person name="Watanabe M."/>
            <person name="Hiraoka S."/>
            <person name="Chiba Y."/>
            <person name="Ishida S."/>
            <person name="Ono Y."/>
            <person name="Takiguchi S."/>
            <person name="Watanabe S."/>
            <person name="Yosida M."/>
            <person name="Hotuta T."/>
            <person name="Kusano J."/>
            <person name="Kanehori K."/>
            <person name="Takahashi-Fujii A."/>
            <person name="Hara H."/>
            <person name="Tanase T.-O."/>
            <person name="Nomura Y."/>
            <person name="Togiya S."/>
            <person name="Komai F."/>
            <person name="Hara R."/>
            <person name="Takeuchi K."/>
            <person name="Arita M."/>
            <person name="Imose N."/>
            <person name="Musashino K."/>
            <person name="Yuuki H."/>
            <person name="Oshima A."/>
            <person name="Sasaki N."/>
            <person name="Aotsuka S."/>
            <person name="Yoshikawa Y."/>
            <person name="Matsunawa H."/>
            <person name="Ichihara T."/>
            <person name="Shiohata N."/>
            <person name="Sano S."/>
            <person name="Moriya S."/>
            <person name="Momiyama H."/>
            <person name="Satoh N."/>
            <person name="Takami S."/>
            <person name="Terashima Y."/>
            <person name="Suzuki O."/>
            <person name="Nakagawa S."/>
            <person name="Senoh A."/>
            <person name="Mizoguchi H."/>
            <person name="Goto Y."/>
            <person name="Shimizu F."/>
            <person name="Wakebe H."/>
            <person name="Hishigaki H."/>
            <person name="Watanabe T."/>
            <person name="Sugiyama A."/>
            <person name="Takemoto M."/>
            <person name="Kawakami B."/>
            <person name="Yamazaki M."/>
            <person name="Watanabe K."/>
            <person name="Kumagai A."/>
            <person name="Itakura S."/>
            <person name="Fukuzumi Y."/>
            <person name="Fujimori Y."/>
            <person name="Komiyama M."/>
            <person name="Tashiro H."/>
            <person name="Tanigami A."/>
            <person name="Fujiwara T."/>
            <person name="Ono T."/>
            <person name="Yamada K."/>
            <person name="Fujii Y."/>
            <person name="Ozaki K."/>
            <person name="Hirao M."/>
            <person name="Ohmori Y."/>
            <person name="Kawabata A."/>
            <person name="Hikiji T."/>
            <person name="Kobatake N."/>
            <person name="Inagaki H."/>
            <person name="Ikema Y."/>
            <person name="Okamoto S."/>
            <person name="Okitani R."/>
            <person name="Kawakami T."/>
            <person name="Noguchi S."/>
            <person name="Itoh T."/>
            <person name="Shigeta K."/>
            <person name="Senba T."/>
            <person name="Matsumura K."/>
            <person name="Nakajima Y."/>
            <person name="Mizuno T."/>
            <person name="Morinaga M."/>
            <person name="Sasaki M."/>
            <person name="Togashi T."/>
            <person name="Oyama M."/>
            <person name="Hata H."/>
            <person name="Watanabe M."/>
            <person name="Komatsu T."/>
            <person name="Mizushima-Sugano J."/>
            <person name="Satoh T."/>
            <person name="Shirai Y."/>
            <person name="Takahashi Y."/>
            <person name="Nakagawa K."/>
            <person name="Okumura K."/>
            <person name="Nagase T."/>
            <person name="Nomura N."/>
            <person name="Kikuchi H."/>
            <person name="Masuho Y."/>
            <person name="Yamashita R."/>
            <person name="Nakai K."/>
            <person name="Yada T."/>
            <person name="Nakamura Y."/>
            <person name="Ohara O."/>
            <person name="Isogai T."/>
            <person name="Sugano S."/>
        </authorList>
    </citation>
    <scope>NUCLEOTIDE SEQUENCE [LARGE SCALE MRNA] (ISOFORM 1)</scope>
    <source>
        <tissue>Testis</tissue>
        <tissue>Tongue</tissue>
    </source>
</reference>
<reference key="3">
    <citation type="journal article" date="2004" name="Nature">
        <title>The DNA sequence and biology of human chromosome 19.</title>
        <authorList>
            <person name="Grimwood J."/>
            <person name="Gordon L.A."/>
            <person name="Olsen A.S."/>
            <person name="Terry A."/>
            <person name="Schmutz J."/>
            <person name="Lamerdin J.E."/>
            <person name="Hellsten U."/>
            <person name="Goodstein D."/>
            <person name="Couronne O."/>
            <person name="Tran-Gyamfi M."/>
            <person name="Aerts A."/>
            <person name="Altherr M."/>
            <person name="Ashworth L."/>
            <person name="Bajorek E."/>
            <person name="Black S."/>
            <person name="Branscomb E."/>
            <person name="Caenepeel S."/>
            <person name="Carrano A.V."/>
            <person name="Caoile C."/>
            <person name="Chan Y.M."/>
            <person name="Christensen M."/>
            <person name="Cleland C.A."/>
            <person name="Copeland A."/>
            <person name="Dalin E."/>
            <person name="Dehal P."/>
            <person name="Denys M."/>
            <person name="Detter J.C."/>
            <person name="Escobar J."/>
            <person name="Flowers D."/>
            <person name="Fotopulos D."/>
            <person name="Garcia C."/>
            <person name="Georgescu A.M."/>
            <person name="Glavina T."/>
            <person name="Gomez M."/>
            <person name="Gonzales E."/>
            <person name="Groza M."/>
            <person name="Hammon N."/>
            <person name="Hawkins T."/>
            <person name="Haydu L."/>
            <person name="Ho I."/>
            <person name="Huang W."/>
            <person name="Israni S."/>
            <person name="Jett J."/>
            <person name="Kadner K."/>
            <person name="Kimball H."/>
            <person name="Kobayashi A."/>
            <person name="Larionov V."/>
            <person name="Leem S.-H."/>
            <person name="Lopez F."/>
            <person name="Lou Y."/>
            <person name="Lowry S."/>
            <person name="Malfatti S."/>
            <person name="Martinez D."/>
            <person name="McCready P.M."/>
            <person name="Medina C."/>
            <person name="Morgan J."/>
            <person name="Nelson K."/>
            <person name="Nolan M."/>
            <person name="Ovcharenko I."/>
            <person name="Pitluck S."/>
            <person name="Pollard M."/>
            <person name="Popkie A.P."/>
            <person name="Predki P."/>
            <person name="Quan G."/>
            <person name="Ramirez L."/>
            <person name="Rash S."/>
            <person name="Retterer J."/>
            <person name="Rodriguez A."/>
            <person name="Rogers S."/>
            <person name="Salamov A."/>
            <person name="Salazar A."/>
            <person name="She X."/>
            <person name="Smith D."/>
            <person name="Slezak T."/>
            <person name="Solovyev V."/>
            <person name="Thayer N."/>
            <person name="Tice H."/>
            <person name="Tsai M."/>
            <person name="Ustaszewska A."/>
            <person name="Vo N."/>
            <person name="Wagner M."/>
            <person name="Wheeler J."/>
            <person name="Wu K."/>
            <person name="Xie G."/>
            <person name="Yang J."/>
            <person name="Dubchak I."/>
            <person name="Furey T.S."/>
            <person name="DeJong P."/>
            <person name="Dickson M."/>
            <person name="Gordon D."/>
            <person name="Eichler E.E."/>
            <person name="Pennacchio L.A."/>
            <person name="Richardson P."/>
            <person name="Stubbs L."/>
            <person name="Rokhsar D.S."/>
            <person name="Myers R.M."/>
            <person name="Rubin E.M."/>
            <person name="Lucas S.M."/>
        </authorList>
    </citation>
    <scope>NUCLEOTIDE SEQUENCE [LARGE SCALE GENOMIC DNA]</scope>
</reference>
<reference key="4">
    <citation type="submission" date="2002-01" db="EMBL/GenBank/DDBJ databases">
        <title>The nucleotide sequence of a long cDNA clone isolated from human spleen.</title>
        <authorList>
            <person name="Jikuya H."/>
            <person name="Takano J."/>
            <person name="Nomura N."/>
            <person name="Kikuno R."/>
            <person name="Nagase T."/>
            <person name="Ohara O."/>
        </authorList>
    </citation>
    <scope>NUCLEOTIDE SEQUENCE [LARGE SCALE MRNA] OF 102-1366 (ISOFORM 1)</scope>
    <source>
        <tissue>Spleen</tissue>
    </source>
</reference>
<reference key="5">
    <citation type="journal article" date="2004" name="Genome Res.">
        <title>The status, quality, and expansion of the NIH full-length cDNA project: the Mammalian Gene Collection (MGC).</title>
        <authorList>
            <consortium name="The MGC Project Team"/>
        </authorList>
    </citation>
    <scope>NUCLEOTIDE SEQUENCE [LARGE SCALE MRNA] OF 898-1366 (ISOFORM 1)</scope>
    <source>
        <tissue>Skin</tissue>
    </source>
</reference>
<reference key="6">
    <citation type="journal article" date="2007" name="J. Immunol.">
        <title>A transcriptional repressor and corepressor induced by the STAT3-regulated anti-inflammatory signaling pathway.</title>
        <authorList>
            <person name="El Kasmi K.C."/>
            <person name="Smith A.M."/>
            <person name="Williams L."/>
            <person name="Neale G."/>
            <person name="Panopolous A."/>
            <person name="Watowich S.S."/>
            <person name="Hacker H."/>
            <person name="Foxwell B.M."/>
            <person name="Murray P.J."/>
        </authorList>
    </citation>
    <scope>FUNCTION</scope>
    <scope>TISSUE SPECIFICITY</scope>
</reference>
<reference key="7">
    <citation type="journal article" date="2015" name="Glia">
        <title>Strawberry notch homolog 2 is a novel inflammatory response factor predominantly but not exclusively expressed by astrocytes in the central nervous system.</title>
        <authorList>
            <person name="Grill M."/>
            <person name="Syme T.E."/>
            <person name="Nocon A.L."/>
            <person name="Lu A.Z."/>
            <person name="Hancock D."/>
            <person name="Rose-John S."/>
            <person name="Campbell I.L."/>
        </authorList>
    </citation>
    <scope>INDUCTION</scope>
</reference>
<sequence length="1366" mass="150275">MLAVGPAMDRDYPQHEPPPAGSLLYSPPPLQSAMLHCPYWNTFSLPPYPAFSSDSRPFMSSASFLGSQPCPDTSYAPVATASSLPPKTCDFAQDSSYFEDFSNISIFSSSVDSLSDIVDTPDFLPADSLNQVSTIWDDNPAPSTHDKLFQLSRPFAGFEDFLPSHSTPLLVSYQEQSVQSQPEEEDEAEEEEAEELGHTETYADYVPSKSKIGKQHPDRVVETSTLSSVPPPDITYTLALPSDSGALSALQLEAITYACQQHEVLLPSGQRAGFLIGDGAGVGKGRTVAGVILENHLRGRKKALWFSVSNDLKYDAERDLRDIEATGIAVHALSKIKYGDTTTSEGVLFATYSALIGESQAGGQHRTRLRQILDWCGEAFEGVIVFDECHKAKNAGSTKMGKAVLDLQNKLPLARVVYASATGASEPRNMIYMSRLGIWGEGTPFRNFEEFLHAIEKRGVGAMEIVAMDMKVSGMYIARQLSFSGVTFRIEEIPLAPAFECVYNRAALLWAEALNVFQQAADWIGLESRKSLWGQFWSAHQRFFKYLCIAAKVRRLVELAREELARDKCVVIGLQSTGEARTREVLGENDGHLNCFVSAAEGVFLSLIQKHFPSTKRKRDRGAGSKRKRRPRGRGAKAPRLACETAGVIRISDDSSTESDPGLDSDFNSSPESLVDDDVVIVDAVGLPSDDRGPLCLLQRDPHGPGVLERVERLKQDLLDKVRRLGRELPVNTLDELIDQLGGPQRVAEMTGRKGRVVSRPDGTVAFESRAEQGLSIDHVNLREKQRFMSGEKLVAIISEASSSGVSLQADRRVQNQRRRVHMTLELPWSADRAIQQFGRTHRSNQVSAPEYVFLISELAGERRFASIVAKRLESLGALTHGDRRATESRDLSKYNFENKYGTRALHCVLTTILSQTENKVPVPQGYPGGVPTFFRDMKQGLLSVGIGGRESRNGCLDVEKDCSITKFLNRILGLEVHKQNALFQYFSDTFDHLIEMDKREGKYDMGILDLAPGIEEIYEESQQVFLAPGHPQDGQVVFYKISVDRGLKWEDAFAKSLALTGPYDGFYLSYKVRGNKPSCLLAEQNRGQFFTVYKPNIGRQSQLEALDSLRRKFHRVTAEEAKEPWESGYALSLTHCSHSAWNRHCRLAQEGKDCLQGLRLRHHYMLCGALLRVWGRIAAVMADVSSSSYLQIVRLKTKDRKKQVGIKIPEGCVRRVLQELRLMDADVKRRQAPALGCPAPPAPRPLALPCGPGEVLDLTYSPPAEAFPPPPHFSFPAPLSLDAGPGVVPLGTPDAQADPAALAHQGCDINFKEVLEDMLRSLHAGPPSEGALGEGAGAGGAAGGGPERQSVIQFSPPFPGAQAPL</sequence>
<gene>
    <name type="primary">SBNO2</name>
    <name type="synonym">KIAA0963</name>
</gene>
<dbReference type="EMBL" id="AB023180">
    <property type="protein sequence ID" value="BAA76807.2"/>
    <property type="status" value="ALT_INIT"/>
    <property type="molecule type" value="mRNA"/>
</dbReference>
<dbReference type="EMBL" id="AK125139">
    <property type="protein sequence ID" value="BAG54153.1"/>
    <property type="molecule type" value="mRNA"/>
</dbReference>
<dbReference type="EMBL" id="AK292407">
    <property type="protein sequence ID" value="BAF85096.1"/>
    <property type="molecule type" value="mRNA"/>
</dbReference>
<dbReference type="EMBL" id="AC005390">
    <property type="protein sequence ID" value="AAC28919.1"/>
    <property type="status" value="ALT_SEQ"/>
    <property type="molecule type" value="Genomic_DNA"/>
</dbReference>
<dbReference type="EMBL" id="AK074102">
    <property type="protein sequence ID" value="BAB84928.1"/>
    <property type="status" value="ALT_FRAME"/>
    <property type="molecule type" value="mRNA"/>
</dbReference>
<dbReference type="EMBL" id="BC106021">
    <property type="protein sequence ID" value="AAI06022.1"/>
    <property type="molecule type" value="mRNA"/>
</dbReference>
<dbReference type="CCDS" id="CCDS45894.1">
    <molecule id="Q9Y2G9-1"/>
</dbReference>
<dbReference type="CCDS" id="CCDS45895.1">
    <molecule id="Q9Y2G9-3"/>
</dbReference>
<dbReference type="PIR" id="T02748">
    <property type="entry name" value="T02748"/>
</dbReference>
<dbReference type="RefSeq" id="NP_001093592.1">
    <molecule id="Q9Y2G9-3"/>
    <property type="nucleotide sequence ID" value="NM_001100122.2"/>
</dbReference>
<dbReference type="RefSeq" id="NP_055778.2">
    <molecule id="Q9Y2G9-1"/>
    <property type="nucleotide sequence ID" value="NM_014963.3"/>
</dbReference>
<dbReference type="BioGRID" id="116568">
    <property type="interactions" value="11"/>
</dbReference>
<dbReference type="FunCoup" id="Q9Y2G9">
    <property type="interactions" value="431"/>
</dbReference>
<dbReference type="IntAct" id="Q9Y2G9">
    <property type="interactions" value="6"/>
</dbReference>
<dbReference type="STRING" id="9606.ENSP00000354733"/>
<dbReference type="iPTMnet" id="Q9Y2G9"/>
<dbReference type="PhosphoSitePlus" id="Q9Y2G9"/>
<dbReference type="BioMuta" id="SBNO2"/>
<dbReference type="DMDM" id="166233537"/>
<dbReference type="jPOST" id="Q9Y2G9"/>
<dbReference type="MassIVE" id="Q9Y2G9"/>
<dbReference type="PaxDb" id="9606-ENSP00000354733"/>
<dbReference type="PeptideAtlas" id="Q9Y2G9"/>
<dbReference type="ProteomicsDB" id="85775">
    <molecule id="Q9Y2G9-1"/>
</dbReference>
<dbReference type="ProteomicsDB" id="85776">
    <molecule id="Q9Y2G9-3"/>
</dbReference>
<dbReference type="Antibodypedia" id="63340">
    <property type="antibodies" value="33 antibodies from 9 providers"/>
</dbReference>
<dbReference type="DNASU" id="22904"/>
<dbReference type="Ensembl" id="ENST00000361757.8">
    <molecule id="Q9Y2G9-1"/>
    <property type="protein sequence ID" value="ENSP00000354733.2"/>
    <property type="gene ID" value="ENSG00000064932.16"/>
</dbReference>
<dbReference type="Ensembl" id="ENST00000438103.6">
    <molecule id="Q9Y2G9-3"/>
    <property type="protein sequence ID" value="ENSP00000400762.1"/>
    <property type="gene ID" value="ENSG00000064932.16"/>
</dbReference>
<dbReference type="Ensembl" id="ENST00000612198.3">
    <molecule id="Q9Y2G9-1"/>
    <property type="protein sequence ID" value="ENSP00000477651.1"/>
    <property type="gene ID" value="ENSG00000278788.4"/>
</dbReference>
<dbReference type="Ensembl" id="ENST00000622719.2">
    <molecule id="Q9Y2G9-3"/>
    <property type="protein sequence ID" value="ENSP00000482802.1"/>
    <property type="gene ID" value="ENSG00000278788.4"/>
</dbReference>
<dbReference type="Ensembl" id="ENST00000631948.1">
    <molecule id="Q9Y2G9-1"/>
    <property type="protein sequence ID" value="ENSP00000488808.1"/>
    <property type="gene ID" value="ENSG00000278788.4"/>
</dbReference>
<dbReference type="GeneID" id="22904"/>
<dbReference type="KEGG" id="hsa:22904"/>
<dbReference type="MANE-Select" id="ENST00000361757.8">
    <property type="protein sequence ID" value="ENSP00000354733.2"/>
    <property type="RefSeq nucleotide sequence ID" value="NM_014963.3"/>
    <property type="RefSeq protein sequence ID" value="NP_055778.2"/>
</dbReference>
<dbReference type="UCSC" id="uc002lrj.5">
    <molecule id="Q9Y2G9-1"/>
    <property type="organism name" value="human"/>
</dbReference>
<dbReference type="AGR" id="HGNC:29158"/>
<dbReference type="CTD" id="22904"/>
<dbReference type="DisGeNET" id="22904"/>
<dbReference type="GeneCards" id="SBNO2"/>
<dbReference type="HGNC" id="HGNC:29158">
    <property type="gene designation" value="SBNO2"/>
</dbReference>
<dbReference type="HPA" id="ENSG00000064932">
    <property type="expression patterns" value="Low tissue specificity"/>
</dbReference>
<dbReference type="MIM" id="615729">
    <property type="type" value="gene"/>
</dbReference>
<dbReference type="neXtProt" id="NX_Q9Y2G9"/>
<dbReference type="OpenTargets" id="ENSG00000064932"/>
<dbReference type="PharmGKB" id="PA162402390"/>
<dbReference type="VEuPathDB" id="HostDB:ENSG00000064932"/>
<dbReference type="eggNOG" id="KOG1513">
    <property type="taxonomic scope" value="Eukaryota"/>
</dbReference>
<dbReference type="GeneTree" id="ENSGT00940000159946"/>
<dbReference type="InParanoid" id="Q9Y2G9"/>
<dbReference type="OMA" id="QPPEPIY"/>
<dbReference type="OrthoDB" id="421838at2759"/>
<dbReference type="PAN-GO" id="Q9Y2G9">
    <property type="GO annotations" value="9 GO annotations based on evolutionary models"/>
</dbReference>
<dbReference type="PhylomeDB" id="Q9Y2G9"/>
<dbReference type="TreeFam" id="TF313526"/>
<dbReference type="PathwayCommons" id="Q9Y2G9"/>
<dbReference type="SignaLink" id="Q9Y2G9"/>
<dbReference type="BioGRID-ORCS" id="22904">
    <property type="hits" value="34 hits in 1161 CRISPR screens"/>
</dbReference>
<dbReference type="ChiTaRS" id="SBNO2">
    <property type="organism name" value="human"/>
</dbReference>
<dbReference type="GenomeRNAi" id="22904"/>
<dbReference type="Pharos" id="Q9Y2G9">
    <property type="development level" value="Tbio"/>
</dbReference>
<dbReference type="PRO" id="PR:Q9Y2G9"/>
<dbReference type="Proteomes" id="UP000005640">
    <property type="component" value="Chromosome 19"/>
</dbReference>
<dbReference type="RNAct" id="Q9Y2G9">
    <property type="molecule type" value="protein"/>
</dbReference>
<dbReference type="Bgee" id="ENSG00000064932">
    <property type="expression patterns" value="Expressed in blood and 96 other cell types or tissues"/>
</dbReference>
<dbReference type="ExpressionAtlas" id="Q9Y2G9">
    <property type="expression patterns" value="baseline and differential"/>
</dbReference>
<dbReference type="GO" id="GO:0005634">
    <property type="term" value="C:nucleus"/>
    <property type="evidence" value="ECO:0000318"/>
    <property type="project" value="GO_Central"/>
</dbReference>
<dbReference type="GO" id="GO:0031490">
    <property type="term" value="F:chromatin DNA binding"/>
    <property type="evidence" value="ECO:0000318"/>
    <property type="project" value="GO_Central"/>
</dbReference>
<dbReference type="GO" id="GO:0042393">
    <property type="term" value="F:histone binding"/>
    <property type="evidence" value="ECO:0000318"/>
    <property type="project" value="GO_Central"/>
</dbReference>
<dbReference type="GO" id="GO:0030282">
    <property type="term" value="P:bone mineralization"/>
    <property type="evidence" value="ECO:0007669"/>
    <property type="project" value="Ensembl"/>
</dbReference>
<dbReference type="GO" id="GO:0061430">
    <property type="term" value="P:bone trabecula morphogenesis"/>
    <property type="evidence" value="ECO:0007669"/>
    <property type="project" value="Ensembl"/>
</dbReference>
<dbReference type="GO" id="GO:0071348">
    <property type="term" value="P:cellular response to interleukin-11"/>
    <property type="evidence" value="ECO:0000250"/>
    <property type="project" value="UniProtKB"/>
</dbReference>
<dbReference type="GO" id="GO:0071354">
    <property type="term" value="P:cellular response to interleukin-6"/>
    <property type="evidence" value="ECO:0000314"/>
    <property type="project" value="UniProtKB"/>
</dbReference>
<dbReference type="GO" id="GO:1990830">
    <property type="term" value="P:cellular response to leukemia inhibitory factor"/>
    <property type="evidence" value="ECO:0000250"/>
    <property type="project" value="UniProtKB"/>
</dbReference>
<dbReference type="GO" id="GO:0071222">
    <property type="term" value="P:cellular response to lipopolysaccharide"/>
    <property type="evidence" value="ECO:0000250"/>
    <property type="project" value="UniProtKB"/>
</dbReference>
<dbReference type="GO" id="GO:0002281">
    <property type="term" value="P:macrophage activation involved in immune response"/>
    <property type="evidence" value="ECO:0000315"/>
    <property type="project" value="UniProtKB"/>
</dbReference>
<dbReference type="GO" id="GO:0045892">
    <property type="term" value="P:negative regulation of DNA-templated transcription"/>
    <property type="evidence" value="ECO:0000315"/>
    <property type="project" value="UniProtKB"/>
</dbReference>
<dbReference type="GO" id="GO:0030316">
    <property type="term" value="P:osteoclast differentiation"/>
    <property type="evidence" value="ECO:0000318"/>
    <property type="project" value="GO_Central"/>
</dbReference>
<dbReference type="GO" id="GO:0072675">
    <property type="term" value="P:osteoclast fusion"/>
    <property type="evidence" value="ECO:0007669"/>
    <property type="project" value="Ensembl"/>
</dbReference>
<dbReference type="GO" id="GO:0045944">
    <property type="term" value="P:positive regulation of transcription by RNA polymerase II"/>
    <property type="evidence" value="ECO:0000318"/>
    <property type="project" value="GO_Central"/>
</dbReference>
<dbReference type="GO" id="GO:0050727">
    <property type="term" value="P:regulation of inflammatory response"/>
    <property type="evidence" value="ECO:0000315"/>
    <property type="project" value="UniProtKB"/>
</dbReference>
<dbReference type="FunFam" id="3.40.50.300:FF:000342">
    <property type="entry name" value="Protein strawberry notch homolog 2"/>
    <property type="match status" value="1"/>
</dbReference>
<dbReference type="FunFam" id="3.40.50.300:FF:003990">
    <property type="entry name" value="Si:ch73-63e15.2"/>
    <property type="match status" value="1"/>
</dbReference>
<dbReference type="Gene3D" id="3.40.50.300">
    <property type="entry name" value="P-loop containing nucleotide triphosphate hydrolases"/>
    <property type="match status" value="1"/>
</dbReference>
<dbReference type="InterPro" id="IPR027417">
    <property type="entry name" value="P-loop_NTPase"/>
</dbReference>
<dbReference type="InterPro" id="IPR026937">
    <property type="entry name" value="SBNO_Helicase_C_dom"/>
</dbReference>
<dbReference type="InterPro" id="IPR026741">
    <property type="entry name" value="SNO"/>
</dbReference>
<dbReference type="InterPro" id="IPR039187">
    <property type="entry name" value="SNO_AAA"/>
</dbReference>
<dbReference type="PANTHER" id="PTHR12706:SF5">
    <property type="entry name" value="PROTEIN STRAWBERRY NOTCH HOMOLOG 2"/>
    <property type="match status" value="1"/>
</dbReference>
<dbReference type="PANTHER" id="PTHR12706">
    <property type="entry name" value="STRAWBERRY NOTCH-RELATED"/>
    <property type="match status" value="1"/>
</dbReference>
<dbReference type="Pfam" id="PF13872">
    <property type="entry name" value="AAA_34"/>
    <property type="match status" value="1"/>
</dbReference>
<dbReference type="Pfam" id="PF13871">
    <property type="entry name" value="Helicase_C_4"/>
    <property type="match status" value="1"/>
</dbReference>
<dbReference type="Pfam" id="PF25373">
    <property type="entry name" value="SBNO"/>
    <property type="match status" value="1"/>
</dbReference>
<dbReference type="SUPFAM" id="SSF52540">
    <property type="entry name" value="P-loop containing nucleoside triphosphate hydrolases"/>
    <property type="match status" value="2"/>
</dbReference>
<evidence type="ECO:0000250" key="1">
    <source>
        <dbReference type="UniProtKB" id="Q7TNB8"/>
    </source>
</evidence>
<evidence type="ECO:0000256" key="2">
    <source>
        <dbReference type="SAM" id="MobiDB-lite"/>
    </source>
</evidence>
<evidence type="ECO:0000269" key="3">
    <source>
    </source>
</evidence>
<evidence type="ECO:0000269" key="4">
    <source>
    </source>
</evidence>
<evidence type="ECO:0000305" key="5"/>